<evidence type="ECO:0000255" key="1">
    <source>
        <dbReference type="HAMAP-Rule" id="MF_00127"/>
    </source>
</evidence>
<gene>
    <name evidence="1" type="primary">hisS</name>
    <name type="ordered locus">Shal_1368</name>
</gene>
<reference key="1">
    <citation type="submission" date="2008-01" db="EMBL/GenBank/DDBJ databases">
        <title>Complete sequence of Shewanella halifaxensis HAW-EB4.</title>
        <authorList>
            <consortium name="US DOE Joint Genome Institute"/>
            <person name="Copeland A."/>
            <person name="Lucas S."/>
            <person name="Lapidus A."/>
            <person name="Glavina del Rio T."/>
            <person name="Dalin E."/>
            <person name="Tice H."/>
            <person name="Bruce D."/>
            <person name="Goodwin L."/>
            <person name="Pitluck S."/>
            <person name="Sims D."/>
            <person name="Brettin T."/>
            <person name="Detter J.C."/>
            <person name="Han C."/>
            <person name="Kuske C.R."/>
            <person name="Schmutz J."/>
            <person name="Larimer F."/>
            <person name="Land M."/>
            <person name="Hauser L."/>
            <person name="Kyrpides N."/>
            <person name="Kim E."/>
            <person name="Zhao J.-S."/>
            <person name="Richardson P."/>
        </authorList>
    </citation>
    <scope>NUCLEOTIDE SEQUENCE [LARGE SCALE GENOMIC DNA]</scope>
    <source>
        <strain>HAW-EB4</strain>
    </source>
</reference>
<feature type="chain" id="PRO_1000076286" description="Histidine--tRNA ligase">
    <location>
        <begin position="1"/>
        <end position="424"/>
    </location>
</feature>
<dbReference type="EC" id="6.1.1.21" evidence="1"/>
<dbReference type="EMBL" id="CP000931">
    <property type="protein sequence ID" value="ABZ75935.1"/>
    <property type="molecule type" value="Genomic_DNA"/>
</dbReference>
<dbReference type="RefSeq" id="WP_012276475.1">
    <property type="nucleotide sequence ID" value="NC_010334.1"/>
</dbReference>
<dbReference type="SMR" id="B0TLI5"/>
<dbReference type="STRING" id="458817.Shal_1368"/>
<dbReference type="KEGG" id="shl:Shal_1368"/>
<dbReference type="eggNOG" id="COG0124">
    <property type="taxonomic scope" value="Bacteria"/>
</dbReference>
<dbReference type="HOGENOM" id="CLU_025113_1_1_6"/>
<dbReference type="OrthoDB" id="9800814at2"/>
<dbReference type="Proteomes" id="UP000001317">
    <property type="component" value="Chromosome"/>
</dbReference>
<dbReference type="GO" id="GO:0005737">
    <property type="term" value="C:cytoplasm"/>
    <property type="evidence" value="ECO:0007669"/>
    <property type="project" value="UniProtKB-SubCell"/>
</dbReference>
<dbReference type="GO" id="GO:0005524">
    <property type="term" value="F:ATP binding"/>
    <property type="evidence" value="ECO:0007669"/>
    <property type="project" value="UniProtKB-UniRule"/>
</dbReference>
<dbReference type="GO" id="GO:0004821">
    <property type="term" value="F:histidine-tRNA ligase activity"/>
    <property type="evidence" value="ECO:0007669"/>
    <property type="project" value="UniProtKB-UniRule"/>
</dbReference>
<dbReference type="GO" id="GO:0006427">
    <property type="term" value="P:histidyl-tRNA aminoacylation"/>
    <property type="evidence" value="ECO:0007669"/>
    <property type="project" value="UniProtKB-UniRule"/>
</dbReference>
<dbReference type="CDD" id="cd00773">
    <property type="entry name" value="HisRS-like_core"/>
    <property type="match status" value="1"/>
</dbReference>
<dbReference type="CDD" id="cd00859">
    <property type="entry name" value="HisRS_anticodon"/>
    <property type="match status" value="1"/>
</dbReference>
<dbReference type="FunFam" id="3.30.930.10:FF:000005">
    <property type="entry name" value="Histidine--tRNA ligase"/>
    <property type="match status" value="1"/>
</dbReference>
<dbReference type="Gene3D" id="3.40.50.800">
    <property type="entry name" value="Anticodon-binding domain"/>
    <property type="match status" value="1"/>
</dbReference>
<dbReference type="Gene3D" id="3.30.930.10">
    <property type="entry name" value="Bira Bifunctional Protein, Domain 2"/>
    <property type="match status" value="1"/>
</dbReference>
<dbReference type="HAMAP" id="MF_00127">
    <property type="entry name" value="His_tRNA_synth"/>
    <property type="match status" value="1"/>
</dbReference>
<dbReference type="InterPro" id="IPR006195">
    <property type="entry name" value="aa-tRNA-synth_II"/>
</dbReference>
<dbReference type="InterPro" id="IPR045864">
    <property type="entry name" value="aa-tRNA-synth_II/BPL/LPL"/>
</dbReference>
<dbReference type="InterPro" id="IPR004154">
    <property type="entry name" value="Anticodon-bd"/>
</dbReference>
<dbReference type="InterPro" id="IPR036621">
    <property type="entry name" value="Anticodon-bd_dom_sf"/>
</dbReference>
<dbReference type="InterPro" id="IPR015807">
    <property type="entry name" value="His-tRNA-ligase"/>
</dbReference>
<dbReference type="InterPro" id="IPR041715">
    <property type="entry name" value="HisRS-like_core"/>
</dbReference>
<dbReference type="InterPro" id="IPR004516">
    <property type="entry name" value="HisRS/HisZ"/>
</dbReference>
<dbReference type="InterPro" id="IPR033656">
    <property type="entry name" value="HisRS_anticodon"/>
</dbReference>
<dbReference type="NCBIfam" id="TIGR00442">
    <property type="entry name" value="hisS"/>
    <property type="match status" value="1"/>
</dbReference>
<dbReference type="PANTHER" id="PTHR43707:SF1">
    <property type="entry name" value="HISTIDINE--TRNA LIGASE, MITOCHONDRIAL-RELATED"/>
    <property type="match status" value="1"/>
</dbReference>
<dbReference type="PANTHER" id="PTHR43707">
    <property type="entry name" value="HISTIDYL-TRNA SYNTHETASE"/>
    <property type="match status" value="1"/>
</dbReference>
<dbReference type="Pfam" id="PF03129">
    <property type="entry name" value="HGTP_anticodon"/>
    <property type="match status" value="1"/>
</dbReference>
<dbReference type="Pfam" id="PF13393">
    <property type="entry name" value="tRNA-synt_His"/>
    <property type="match status" value="1"/>
</dbReference>
<dbReference type="PIRSF" id="PIRSF001549">
    <property type="entry name" value="His-tRNA_synth"/>
    <property type="match status" value="1"/>
</dbReference>
<dbReference type="SUPFAM" id="SSF52954">
    <property type="entry name" value="Class II aaRS ABD-related"/>
    <property type="match status" value="1"/>
</dbReference>
<dbReference type="SUPFAM" id="SSF55681">
    <property type="entry name" value="Class II aaRS and biotin synthetases"/>
    <property type="match status" value="1"/>
</dbReference>
<dbReference type="PROSITE" id="PS50862">
    <property type="entry name" value="AA_TRNA_LIGASE_II"/>
    <property type="match status" value="1"/>
</dbReference>
<comment type="catalytic activity">
    <reaction evidence="1">
        <text>tRNA(His) + L-histidine + ATP = L-histidyl-tRNA(His) + AMP + diphosphate + H(+)</text>
        <dbReference type="Rhea" id="RHEA:17313"/>
        <dbReference type="Rhea" id="RHEA-COMP:9665"/>
        <dbReference type="Rhea" id="RHEA-COMP:9689"/>
        <dbReference type="ChEBI" id="CHEBI:15378"/>
        <dbReference type="ChEBI" id="CHEBI:30616"/>
        <dbReference type="ChEBI" id="CHEBI:33019"/>
        <dbReference type="ChEBI" id="CHEBI:57595"/>
        <dbReference type="ChEBI" id="CHEBI:78442"/>
        <dbReference type="ChEBI" id="CHEBI:78527"/>
        <dbReference type="ChEBI" id="CHEBI:456215"/>
        <dbReference type="EC" id="6.1.1.21"/>
    </reaction>
</comment>
<comment type="subunit">
    <text evidence="1">Homodimer.</text>
</comment>
<comment type="subcellular location">
    <subcellularLocation>
        <location evidence="1">Cytoplasm</location>
    </subcellularLocation>
</comment>
<comment type="similarity">
    <text evidence="1">Belongs to the class-II aminoacyl-tRNA synthetase family.</text>
</comment>
<name>SYH_SHEHH</name>
<accession>B0TLI5</accession>
<protein>
    <recommendedName>
        <fullName evidence="1">Histidine--tRNA ligase</fullName>
        <ecNumber evidence="1">6.1.1.21</ecNumber>
    </recommendedName>
    <alternativeName>
        <fullName evidence="1">Histidyl-tRNA synthetase</fullName>
        <shortName evidence="1">HisRS</shortName>
    </alternativeName>
</protein>
<proteinExistence type="inferred from homology"/>
<keyword id="KW-0030">Aminoacyl-tRNA synthetase</keyword>
<keyword id="KW-0067">ATP-binding</keyword>
<keyword id="KW-0963">Cytoplasm</keyword>
<keyword id="KW-0436">Ligase</keyword>
<keyword id="KW-0547">Nucleotide-binding</keyword>
<keyword id="KW-0648">Protein biosynthesis</keyword>
<sequence length="424" mass="47429">MAKQIQAIRGMNDILPTQSPLWQKLETVLRETVGSYGYSEIRTPIVESTDLFKRSIGEVTDIVEKEMYTFEDRNGDSLTLRPEGTASTVRAGNEHGLLYNQEQRLWYMGPMFRHERPQKGRYRQFHQFGVEVYGIPTADIDAEVLMLSAKLWEKLGITEHVTLELNTLGDVEERAAYRDALIAFLEQHKEVLDEDSQRRMYSNPLRVLDSKNADVQALLADAPVLMDYFGEDTRSHFSHLCELLEAVGIQYTINPRLVRGLDYYNRTVFEWVTSSLGSQGTVLAGGRYDGLVGQLGGKPTPAVGFAMGLERIVLLLETLELDKDIGPSVDVYVTAMGDNCRVEAIKIAQELRASLPTAKVMSHCGGGNFKKQMKRADKSGATVALVIGEDELANNQVAVKHLREDKAQELVARDALATYIAELI</sequence>
<organism>
    <name type="scientific">Shewanella halifaxensis (strain HAW-EB4)</name>
    <dbReference type="NCBI Taxonomy" id="458817"/>
    <lineage>
        <taxon>Bacteria</taxon>
        <taxon>Pseudomonadati</taxon>
        <taxon>Pseudomonadota</taxon>
        <taxon>Gammaproteobacteria</taxon>
        <taxon>Alteromonadales</taxon>
        <taxon>Shewanellaceae</taxon>
        <taxon>Shewanella</taxon>
    </lineage>
</organism>